<dbReference type="EC" id="1.14.-.-" evidence="1"/>
<dbReference type="EMBL" id="CP000050">
    <property type="protein sequence ID" value="AAY49151.1"/>
    <property type="molecule type" value="Genomic_DNA"/>
</dbReference>
<dbReference type="RefSeq" id="WP_011037242.1">
    <property type="nucleotide sequence ID" value="NZ_CP155948.1"/>
</dbReference>
<dbReference type="SMR" id="Q4UUX2"/>
<dbReference type="KEGG" id="xcb:XC_2095"/>
<dbReference type="HOGENOM" id="CLU_038878_0_1_6"/>
<dbReference type="Proteomes" id="UP000000420">
    <property type="component" value="Chromosome"/>
</dbReference>
<dbReference type="GO" id="GO:0016705">
    <property type="term" value="F:oxidoreductase activity, acting on paired donors, with incorporation or reduction of molecular oxygen"/>
    <property type="evidence" value="ECO:0007669"/>
    <property type="project" value="UniProtKB-UniRule"/>
</dbReference>
<dbReference type="GO" id="GO:0006400">
    <property type="term" value="P:tRNA modification"/>
    <property type="evidence" value="ECO:0007669"/>
    <property type="project" value="UniProtKB-UniRule"/>
</dbReference>
<dbReference type="Gene3D" id="3.30.70.100">
    <property type="match status" value="1"/>
</dbReference>
<dbReference type="Gene3D" id="3.40.250.10">
    <property type="entry name" value="Rhodanese-like domain"/>
    <property type="match status" value="1"/>
</dbReference>
<dbReference type="HAMAP" id="MF_00469">
    <property type="entry name" value="TrhO"/>
    <property type="match status" value="1"/>
</dbReference>
<dbReference type="InterPro" id="IPR001763">
    <property type="entry name" value="Rhodanese-like_dom"/>
</dbReference>
<dbReference type="InterPro" id="IPR036873">
    <property type="entry name" value="Rhodanese-like_dom_sf"/>
</dbReference>
<dbReference type="InterPro" id="IPR020936">
    <property type="entry name" value="TrhO"/>
</dbReference>
<dbReference type="InterPro" id="IPR040503">
    <property type="entry name" value="TRHO_N"/>
</dbReference>
<dbReference type="NCBIfam" id="NF003703">
    <property type="entry name" value="PRK05320.1"/>
    <property type="match status" value="1"/>
</dbReference>
<dbReference type="PANTHER" id="PTHR43268:SF3">
    <property type="entry name" value="RHODANESE-LIKE DOMAIN-CONTAINING PROTEIN 7-RELATED"/>
    <property type="match status" value="1"/>
</dbReference>
<dbReference type="PANTHER" id="PTHR43268">
    <property type="entry name" value="THIOSULFATE SULFURTRANSFERASE/RHODANESE-LIKE DOMAIN-CONTAINING PROTEIN 2"/>
    <property type="match status" value="1"/>
</dbReference>
<dbReference type="Pfam" id="PF00581">
    <property type="entry name" value="Rhodanese"/>
    <property type="match status" value="1"/>
</dbReference>
<dbReference type="Pfam" id="PF17773">
    <property type="entry name" value="UPF0176_N"/>
    <property type="match status" value="1"/>
</dbReference>
<dbReference type="SMART" id="SM00450">
    <property type="entry name" value="RHOD"/>
    <property type="match status" value="1"/>
</dbReference>
<dbReference type="SUPFAM" id="SSF52821">
    <property type="entry name" value="Rhodanese/Cell cycle control phosphatase"/>
    <property type="match status" value="1"/>
</dbReference>
<dbReference type="PROSITE" id="PS50206">
    <property type="entry name" value="RHODANESE_3"/>
    <property type="match status" value="1"/>
</dbReference>
<feature type="chain" id="PRO_0000242955" description="tRNA uridine(34) hydroxylase">
    <location>
        <begin position="1"/>
        <end position="253"/>
    </location>
</feature>
<feature type="domain" description="Rhodanese" evidence="1">
    <location>
        <begin position="127"/>
        <end position="221"/>
    </location>
</feature>
<feature type="active site" description="Cysteine persulfide intermediate" evidence="1">
    <location>
        <position position="181"/>
    </location>
</feature>
<name>TRHO_XANC8</name>
<proteinExistence type="inferred from homology"/>
<organism>
    <name type="scientific">Xanthomonas campestris pv. campestris (strain 8004)</name>
    <dbReference type="NCBI Taxonomy" id="314565"/>
    <lineage>
        <taxon>Bacteria</taxon>
        <taxon>Pseudomonadati</taxon>
        <taxon>Pseudomonadota</taxon>
        <taxon>Gammaproteobacteria</taxon>
        <taxon>Lysobacterales</taxon>
        <taxon>Lysobacteraceae</taxon>
        <taxon>Xanthomonas</taxon>
    </lineage>
</organism>
<comment type="function">
    <text evidence="1">Catalyzes oxygen-dependent 5-hydroxyuridine (ho5U) modification at position 34 in tRNAs.</text>
</comment>
<comment type="catalytic activity">
    <reaction evidence="1">
        <text>uridine(34) in tRNA + AH2 + O2 = 5-hydroxyuridine(34) in tRNA + A + H2O</text>
        <dbReference type="Rhea" id="RHEA:64224"/>
        <dbReference type="Rhea" id="RHEA-COMP:11727"/>
        <dbReference type="Rhea" id="RHEA-COMP:13381"/>
        <dbReference type="ChEBI" id="CHEBI:13193"/>
        <dbReference type="ChEBI" id="CHEBI:15377"/>
        <dbReference type="ChEBI" id="CHEBI:15379"/>
        <dbReference type="ChEBI" id="CHEBI:17499"/>
        <dbReference type="ChEBI" id="CHEBI:65315"/>
        <dbReference type="ChEBI" id="CHEBI:136877"/>
    </reaction>
</comment>
<comment type="similarity">
    <text evidence="1">Belongs to the TrhO family.</text>
</comment>
<accession>Q4UUX2</accession>
<keyword id="KW-0560">Oxidoreductase</keyword>
<keyword id="KW-0819">tRNA processing</keyword>
<gene>
    <name evidence="1" type="primary">trhO</name>
    <name type="ordered locus">XC_2095</name>
</gene>
<sequence>MITNTAAYQFAPIHDPQQLADSVLERAQQRALKGSVLVAEEGINLFLAGDAEQIASFYAWLHADARFAQMRVKYSHSAEQPFARLKVKVKPEIISFRRDDASPLQGRAPSVAPAVLRKWMQQGHDDHGRPLVLLDTRNAQEVAYGTFQGALTLPIDKFTELPEALQPHRAALADATVVSFCTGGIRCEKAALWMHAEGMDNVLQLEGGILGYFEDVGGEGYDGRCFVFDERVALDAELRPLVDGAACADAGKI</sequence>
<evidence type="ECO:0000255" key="1">
    <source>
        <dbReference type="HAMAP-Rule" id="MF_00469"/>
    </source>
</evidence>
<protein>
    <recommendedName>
        <fullName evidence="1">tRNA uridine(34) hydroxylase</fullName>
        <ecNumber evidence="1">1.14.-.-</ecNumber>
    </recommendedName>
    <alternativeName>
        <fullName evidence="1">tRNA hydroxylation protein O</fullName>
    </alternativeName>
</protein>
<reference key="1">
    <citation type="journal article" date="2005" name="Genome Res.">
        <title>Comparative and functional genomic analyses of the pathogenicity of phytopathogen Xanthomonas campestris pv. campestris.</title>
        <authorList>
            <person name="Qian W."/>
            <person name="Jia Y."/>
            <person name="Ren S.-X."/>
            <person name="He Y.-Q."/>
            <person name="Feng J.-X."/>
            <person name="Lu L.-F."/>
            <person name="Sun Q."/>
            <person name="Ying G."/>
            <person name="Tang D.-J."/>
            <person name="Tang H."/>
            <person name="Wu W."/>
            <person name="Hao P."/>
            <person name="Wang L."/>
            <person name="Jiang B.-L."/>
            <person name="Zeng S."/>
            <person name="Gu W.-Y."/>
            <person name="Lu G."/>
            <person name="Rong L."/>
            <person name="Tian Y."/>
            <person name="Yao Z."/>
            <person name="Fu G."/>
            <person name="Chen B."/>
            <person name="Fang R."/>
            <person name="Qiang B."/>
            <person name="Chen Z."/>
            <person name="Zhao G.-P."/>
            <person name="Tang J.-L."/>
            <person name="He C."/>
        </authorList>
    </citation>
    <scope>NUCLEOTIDE SEQUENCE [LARGE SCALE GENOMIC DNA]</scope>
    <source>
        <strain>8004</strain>
    </source>
</reference>